<sequence length="431" mass="48731">MKNKINLRSLAAQAIEQVIEQGQSLSNVLPPLQQKVSDKDKALLQELCFGVLRTLSQLEWLINKLMARPMTGKQRTVHFLIMVGLYQLLYTRIPPHAALAETVEGAVAIKRPQLKGLINGVLRQFQRQQEALLVEFAEHENRYLHPKWLLKRLQQAWPQQWQEIVDANNQRPPMWLRVNRNHHSRDEWLALLKEAGLEGFTHPDYPDAVRLATPAPVHALPGFAEGWVTVQDASAQGCMRYLLPENGERILDLCAAPGGKTTHILEVAPQAQVMAVDIDEQRLSRVYDNLKRLGMKAEVKQGDGRFPEQWCGNEQFDRILLDAPCSATGVIRRHPDIKWLRRDRDIAELAQLQAEILNSTWEHLKPGGTLVYATCSILPEENSQQISAFLARTPDAELHATGTPASPGQQNLPGPEEGDGFFYAKLIKRRN</sequence>
<comment type="function">
    <text evidence="1">Specifically methylates the cytosine at position 967 (m5C967) of 16S rRNA.</text>
</comment>
<comment type="catalytic activity">
    <reaction evidence="1">
        <text>cytidine(967) in 16S rRNA + S-adenosyl-L-methionine = 5-methylcytidine(967) in 16S rRNA + S-adenosyl-L-homocysteine + H(+)</text>
        <dbReference type="Rhea" id="RHEA:42748"/>
        <dbReference type="Rhea" id="RHEA-COMP:10219"/>
        <dbReference type="Rhea" id="RHEA-COMP:10220"/>
        <dbReference type="ChEBI" id="CHEBI:15378"/>
        <dbReference type="ChEBI" id="CHEBI:57856"/>
        <dbReference type="ChEBI" id="CHEBI:59789"/>
        <dbReference type="ChEBI" id="CHEBI:74483"/>
        <dbReference type="ChEBI" id="CHEBI:82748"/>
        <dbReference type="EC" id="2.1.1.176"/>
    </reaction>
</comment>
<comment type="subcellular location">
    <subcellularLocation>
        <location evidence="1">Cytoplasm</location>
    </subcellularLocation>
</comment>
<comment type="similarity">
    <text evidence="1">Belongs to the class I-like SAM-binding methyltransferase superfamily. RsmB/NOP family.</text>
</comment>
<reference key="1">
    <citation type="journal article" date="2008" name="PLoS Genet.">
        <title>Complete genome sequence of the N2-fixing broad host range endophyte Klebsiella pneumoniae 342 and virulence predictions verified in mice.</title>
        <authorList>
            <person name="Fouts D.E."/>
            <person name="Tyler H.L."/>
            <person name="DeBoy R.T."/>
            <person name="Daugherty S."/>
            <person name="Ren Q."/>
            <person name="Badger J.H."/>
            <person name="Durkin A.S."/>
            <person name="Huot H."/>
            <person name="Shrivastava S."/>
            <person name="Kothari S."/>
            <person name="Dodson R.J."/>
            <person name="Mohamoud Y."/>
            <person name="Khouri H."/>
            <person name="Roesch L.F.W."/>
            <person name="Krogfelt K.A."/>
            <person name="Struve C."/>
            <person name="Triplett E.W."/>
            <person name="Methe B.A."/>
        </authorList>
    </citation>
    <scope>NUCLEOTIDE SEQUENCE [LARGE SCALE GENOMIC DNA]</scope>
    <source>
        <strain>342</strain>
    </source>
</reference>
<feature type="chain" id="PRO_0000366160" description="Ribosomal RNA small subunit methyltransferase B">
    <location>
        <begin position="1"/>
        <end position="431"/>
    </location>
</feature>
<feature type="region of interest" description="Disordered" evidence="2">
    <location>
        <begin position="398"/>
        <end position="417"/>
    </location>
</feature>
<feature type="compositionally biased region" description="Polar residues" evidence="2">
    <location>
        <begin position="403"/>
        <end position="412"/>
    </location>
</feature>
<feature type="active site" description="Nucleophile" evidence="1">
    <location>
        <position position="375"/>
    </location>
</feature>
<feature type="binding site" evidence="1">
    <location>
        <begin position="254"/>
        <end position="260"/>
    </location>
    <ligand>
        <name>S-adenosyl-L-methionine</name>
        <dbReference type="ChEBI" id="CHEBI:59789"/>
    </ligand>
</feature>
<feature type="binding site" evidence="1">
    <location>
        <position position="277"/>
    </location>
    <ligand>
        <name>S-adenosyl-L-methionine</name>
        <dbReference type="ChEBI" id="CHEBI:59789"/>
    </ligand>
</feature>
<feature type="binding site" evidence="1">
    <location>
        <position position="303"/>
    </location>
    <ligand>
        <name>S-adenosyl-L-methionine</name>
        <dbReference type="ChEBI" id="CHEBI:59789"/>
    </ligand>
</feature>
<feature type="binding site" evidence="1">
    <location>
        <position position="322"/>
    </location>
    <ligand>
        <name>S-adenosyl-L-methionine</name>
        <dbReference type="ChEBI" id="CHEBI:59789"/>
    </ligand>
</feature>
<dbReference type="EC" id="2.1.1.176" evidence="1"/>
<dbReference type="EMBL" id="CP000964">
    <property type="protein sequence ID" value="ACI08496.1"/>
    <property type="molecule type" value="Genomic_DNA"/>
</dbReference>
<dbReference type="SMR" id="B5XNC2"/>
<dbReference type="KEGG" id="kpe:KPK_0427"/>
<dbReference type="HOGENOM" id="CLU_005316_0_4_6"/>
<dbReference type="Proteomes" id="UP000001734">
    <property type="component" value="Chromosome"/>
</dbReference>
<dbReference type="GO" id="GO:0005829">
    <property type="term" value="C:cytosol"/>
    <property type="evidence" value="ECO:0007669"/>
    <property type="project" value="TreeGrafter"/>
</dbReference>
<dbReference type="GO" id="GO:0003723">
    <property type="term" value="F:RNA binding"/>
    <property type="evidence" value="ECO:0007669"/>
    <property type="project" value="UniProtKB-KW"/>
</dbReference>
<dbReference type="GO" id="GO:0009383">
    <property type="term" value="F:rRNA (cytosine-C5-)-methyltransferase activity"/>
    <property type="evidence" value="ECO:0007669"/>
    <property type="project" value="TreeGrafter"/>
</dbReference>
<dbReference type="GO" id="GO:0006355">
    <property type="term" value="P:regulation of DNA-templated transcription"/>
    <property type="evidence" value="ECO:0007669"/>
    <property type="project" value="InterPro"/>
</dbReference>
<dbReference type="GO" id="GO:0070475">
    <property type="term" value="P:rRNA base methylation"/>
    <property type="evidence" value="ECO:0007669"/>
    <property type="project" value="TreeGrafter"/>
</dbReference>
<dbReference type="CDD" id="cd02440">
    <property type="entry name" value="AdoMet_MTases"/>
    <property type="match status" value="1"/>
</dbReference>
<dbReference type="CDD" id="cd00620">
    <property type="entry name" value="Methyltransferase_Sun"/>
    <property type="match status" value="1"/>
</dbReference>
<dbReference type="FunFam" id="1.10.287.730:FF:000001">
    <property type="entry name" value="Ribosomal RNA small subunit methyltransferase B"/>
    <property type="match status" value="1"/>
</dbReference>
<dbReference type="FunFam" id="1.10.940.10:FF:000002">
    <property type="entry name" value="Ribosomal RNA small subunit methyltransferase B"/>
    <property type="match status" value="1"/>
</dbReference>
<dbReference type="FunFam" id="3.30.70.1170:FF:000002">
    <property type="entry name" value="Ribosomal RNA small subunit methyltransferase B"/>
    <property type="match status" value="1"/>
</dbReference>
<dbReference type="FunFam" id="3.40.50.150:FF:000022">
    <property type="entry name" value="Ribosomal RNA small subunit methyltransferase B"/>
    <property type="match status" value="1"/>
</dbReference>
<dbReference type="Gene3D" id="1.10.287.730">
    <property type="entry name" value="Helix hairpin bin"/>
    <property type="match status" value="1"/>
</dbReference>
<dbReference type="Gene3D" id="1.10.940.10">
    <property type="entry name" value="NusB-like"/>
    <property type="match status" value="1"/>
</dbReference>
<dbReference type="Gene3D" id="3.30.70.1170">
    <property type="entry name" value="Sun protein, domain 3"/>
    <property type="match status" value="1"/>
</dbReference>
<dbReference type="Gene3D" id="3.40.50.150">
    <property type="entry name" value="Vaccinia Virus protein VP39"/>
    <property type="match status" value="1"/>
</dbReference>
<dbReference type="HAMAP" id="MF_01856">
    <property type="entry name" value="16SrRNA_methyltr_B"/>
    <property type="match status" value="1"/>
</dbReference>
<dbReference type="InterPro" id="IPR049560">
    <property type="entry name" value="MeTrfase_RsmB-F_NOP2_cat"/>
</dbReference>
<dbReference type="InterPro" id="IPR001678">
    <property type="entry name" value="MeTrfase_RsmB-F_NOP2_dom"/>
</dbReference>
<dbReference type="InterPro" id="IPR035926">
    <property type="entry name" value="NusB-like_sf"/>
</dbReference>
<dbReference type="InterPro" id="IPR006027">
    <property type="entry name" value="NusB_RsmB_TIM44"/>
</dbReference>
<dbReference type="InterPro" id="IPR023267">
    <property type="entry name" value="RCMT"/>
</dbReference>
<dbReference type="InterPro" id="IPR004573">
    <property type="entry name" value="rRNA_ssu_MeTfrase_B"/>
</dbReference>
<dbReference type="InterPro" id="IPR023541">
    <property type="entry name" value="rRNA_ssu_MeTfrase_B_ent"/>
</dbReference>
<dbReference type="InterPro" id="IPR054728">
    <property type="entry name" value="RsmB-like_ferredoxin"/>
</dbReference>
<dbReference type="InterPro" id="IPR048019">
    <property type="entry name" value="RsmB-like_N"/>
</dbReference>
<dbReference type="InterPro" id="IPR018314">
    <property type="entry name" value="RsmB/NOL1/NOP2-like_CS"/>
</dbReference>
<dbReference type="InterPro" id="IPR029063">
    <property type="entry name" value="SAM-dependent_MTases_sf"/>
</dbReference>
<dbReference type="NCBIfam" id="NF008149">
    <property type="entry name" value="PRK10901.1"/>
    <property type="match status" value="1"/>
</dbReference>
<dbReference type="NCBIfam" id="NF011494">
    <property type="entry name" value="PRK14902.1"/>
    <property type="match status" value="1"/>
</dbReference>
<dbReference type="NCBIfam" id="TIGR00563">
    <property type="entry name" value="rsmB"/>
    <property type="match status" value="1"/>
</dbReference>
<dbReference type="PANTHER" id="PTHR22807:SF61">
    <property type="entry name" value="NOL1_NOP2_SUN FAMILY PROTEIN _ ANTITERMINATION NUSB DOMAIN-CONTAINING PROTEIN"/>
    <property type="match status" value="1"/>
</dbReference>
<dbReference type="PANTHER" id="PTHR22807">
    <property type="entry name" value="NOP2 YEAST -RELATED NOL1/NOP2/FMU SUN DOMAIN-CONTAINING"/>
    <property type="match status" value="1"/>
</dbReference>
<dbReference type="Pfam" id="PF01189">
    <property type="entry name" value="Methyltr_RsmB-F"/>
    <property type="match status" value="1"/>
</dbReference>
<dbReference type="Pfam" id="PF01029">
    <property type="entry name" value="NusB"/>
    <property type="match status" value="1"/>
</dbReference>
<dbReference type="Pfam" id="PF22458">
    <property type="entry name" value="RsmF-B_ferredox"/>
    <property type="match status" value="1"/>
</dbReference>
<dbReference type="PRINTS" id="PR02008">
    <property type="entry name" value="RCMTFAMILY"/>
</dbReference>
<dbReference type="SUPFAM" id="SSF48013">
    <property type="entry name" value="NusB-like"/>
    <property type="match status" value="1"/>
</dbReference>
<dbReference type="SUPFAM" id="SSF53335">
    <property type="entry name" value="S-adenosyl-L-methionine-dependent methyltransferases"/>
    <property type="match status" value="1"/>
</dbReference>
<dbReference type="PROSITE" id="PS01153">
    <property type="entry name" value="NOL1_NOP2_SUN"/>
    <property type="match status" value="1"/>
</dbReference>
<dbReference type="PROSITE" id="PS51686">
    <property type="entry name" value="SAM_MT_RSMB_NOP"/>
    <property type="match status" value="1"/>
</dbReference>
<protein>
    <recommendedName>
        <fullName evidence="1">Ribosomal RNA small subunit methyltransferase B</fullName>
        <ecNumber evidence="1">2.1.1.176</ecNumber>
    </recommendedName>
    <alternativeName>
        <fullName evidence="1">16S rRNA m5C967 methyltransferase</fullName>
    </alternativeName>
    <alternativeName>
        <fullName evidence="1">rRNA (cytosine-C(5)-)-methyltransferase RsmB</fullName>
    </alternativeName>
</protein>
<organism>
    <name type="scientific">Klebsiella pneumoniae (strain 342)</name>
    <dbReference type="NCBI Taxonomy" id="507522"/>
    <lineage>
        <taxon>Bacteria</taxon>
        <taxon>Pseudomonadati</taxon>
        <taxon>Pseudomonadota</taxon>
        <taxon>Gammaproteobacteria</taxon>
        <taxon>Enterobacterales</taxon>
        <taxon>Enterobacteriaceae</taxon>
        <taxon>Klebsiella/Raoultella group</taxon>
        <taxon>Klebsiella</taxon>
        <taxon>Klebsiella pneumoniae complex</taxon>
    </lineage>
</organism>
<name>RSMB_KLEP3</name>
<accession>B5XNC2</accession>
<keyword id="KW-0963">Cytoplasm</keyword>
<keyword id="KW-0489">Methyltransferase</keyword>
<keyword id="KW-0694">RNA-binding</keyword>
<keyword id="KW-0698">rRNA processing</keyword>
<keyword id="KW-0949">S-adenosyl-L-methionine</keyword>
<keyword id="KW-0808">Transferase</keyword>
<proteinExistence type="inferred from homology"/>
<evidence type="ECO:0000255" key="1">
    <source>
        <dbReference type="HAMAP-Rule" id="MF_01856"/>
    </source>
</evidence>
<evidence type="ECO:0000256" key="2">
    <source>
        <dbReference type="SAM" id="MobiDB-lite"/>
    </source>
</evidence>
<gene>
    <name evidence="1" type="primary">rsmB</name>
    <name evidence="1" type="synonym">sun</name>
    <name type="ordered locus">KPK_0427</name>
</gene>